<name>GPR27_MOUSE</name>
<evidence type="ECO:0000250" key="1"/>
<evidence type="ECO:0000255" key="2"/>
<evidence type="ECO:0000255" key="3">
    <source>
        <dbReference type="PROSITE-ProRule" id="PRU00521"/>
    </source>
</evidence>
<comment type="function">
    <text evidence="1">Orphan receptor. Possible candidate for amine-like G-protein coupled receptor (By similarity).</text>
</comment>
<comment type="subcellular location">
    <subcellularLocation>
        <location evidence="1">Cell membrane</location>
        <topology evidence="1">Multi-pass membrane protein</topology>
    </subcellularLocation>
</comment>
<comment type="similarity">
    <text evidence="3">Belongs to the G-protein coupled receptor 1 family.</text>
</comment>
<protein>
    <recommendedName>
        <fullName>Probable G-protein coupled receptor 27</fullName>
    </recommendedName>
    <alternativeName>
        <fullName>Super conserved receptor expressed in brain 1</fullName>
    </alternativeName>
</protein>
<organism>
    <name type="scientific">Mus musculus</name>
    <name type="common">Mouse</name>
    <dbReference type="NCBI Taxonomy" id="10090"/>
    <lineage>
        <taxon>Eukaryota</taxon>
        <taxon>Metazoa</taxon>
        <taxon>Chordata</taxon>
        <taxon>Craniata</taxon>
        <taxon>Vertebrata</taxon>
        <taxon>Euteleostomi</taxon>
        <taxon>Mammalia</taxon>
        <taxon>Eutheria</taxon>
        <taxon>Euarchontoglires</taxon>
        <taxon>Glires</taxon>
        <taxon>Rodentia</taxon>
        <taxon>Myomorpha</taxon>
        <taxon>Muroidea</taxon>
        <taxon>Muridae</taxon>
        <taxon>Murinae</taxon>
        <taxon>Mus</taxon>
        <taxon>Mus</taxon>
    </lineage>
</organism>
<proteinExistence type="inferred from homology"/>
<sequence>MANASEPGGGGSGGGAEAAALGLRLATLSLLLCVSLAGNVLFALLIVRERSLHRAPYYLLLDLCLADGLRALACLPAVMLAARRAAAAAGTPPGALGCKLLAFLAALFCFHAAFLLLGVGVTRYLAIAHHRFYAERLAGWPCAAMLVCAAWALALAAAFPPVLDGGGADDEDAPCALEQRPDGAPGALGFLLLLAAVVGATHLVYLRLLFFIHDRRKMRPARLVPAVSHDWTFHGPGATGQAAANWTAGFGRGPTPPALVGIRPAGPGRGARRLLVLEEFKTEKRLCKMFYAITLLFLLLWGPYVVASYLRVLVRPGAVPQAYLTASVWLTFAQAGINPVVCFLFNRELRDCFRAQFPCCQSPQATQATLPCDLKGIGL</sequence>
<feature type="chain" id="PRO_0000069549" description="Probable G-protein coupled receptor 27">
    <location>
        <begin position="1"/>
        <end position="379"/>
    </location>
</feature>
<feature type="topological domain" description="Extracellular" evidence="2">
    <location>
        <begin position="1"/>
        <end position="26"/>
    </location>
</feature>
<feature type="transmembrane region" description="Helical; Name=1" evidence="2">
    <location>
        <begin position="27"/>
        <end position="47"/>
    </location>
</feature>
<feature type="topological domain" description="Cytoplasmic" evidence="2">
    <location>
        <begin position="48"/>
        <end position="58"/>
    </location>
</feature>
<feature type="transmembrane region" description="Helical; Name=2" evidence="2">
    <location>
        <begin position="59"/>
        <end position="79"/>
    </location>
</feature>
<feature type="topological domain" description="Extracellular" evidence="2">
    <location>
        <begin position="80"/>
        <end position="100"/>
    </location>
</feature>
<feature type="transmembrane region" description="Helical; Name=3" evidence="2">
    <location>
        <begin position="101"/>
        <end position="121"/>
    </location>
</feature>
<feature type="topological domain" description="Cytoplasmic" evidence="2">
    <location>
        <begin position="122"/>
        <end position="142"/>
    </location>
</feature>
<feature type="transmembrane region" description="Helical; Name=4" evidence="2">
    <location>
        <begin position="143"/>
        <end position="163"/>
    </location>
</feature>
<feature type="topological domain" description="Extracellular" evidence="2">
    <location>
        <begin position="164"/>
        <end position="185"/>
    </location>
</feature>
<feature type="transmembrane region" description="Helical; Name=5" evidence="2">
    <location>
        <begin position="186"/>
        <end position="206"/>
    </location>
</feature>
<feature type="topological domain" description="Cytoplasmic" evidence="2">
    <location>
        <begin position="207"/>
        <end position="289"/>
    </location>
</feature>
<feature type="transmembrane region" description="Helical; Name=6" evidence="2">
    <location>
        <begin position="290"/>
        <end position="310"/>
    </location>
</feature>
<feature type="topological domain" description="Extracellular" evidence="2">
    <location>
        <begin position="311"/>
        <end position="324"/>
    </location>
</feature>
<feature type="transmembrane region" description="Helical; Name=7" evidence="2">
    <location>
        <begin position="325"/>
        <end position="345"/>
    </location>
</feature>
<feature type="topological domain" description="Cytoplasmic" evidence="2">
    <location>
        <begin position="346"/>
        <end position="379"/>
    </location>
</feature>
<feature type="glycosylation site" description="N-linked (GlcNAc...) asparagine" evidence="2">
    <location>
        <position position="3"/>
    </location>
</feature>
<feature type="disulfide bond" evidence="3">
    <location>
        <begin position="98"/>
        <end position="175"/>
    </location>
</feature>
<dbReference type="EMBL" id="AF027955">
    <property type="protein sequence ID" value="AAC53540.1"/>
    <property type="molecule type" value="Genomic_DNA"/>
</dbReference>
<dbReference type="CCDS" id="CCDS20387.1"/>
<dbReference type="RefSeq" id="NP_032184.1">
    <property type="nucleotide sequence ID" value="NM_008158.2"/>
</dbReference>
<dbReference type="SMR" id="O54897"/>
<dbReference type="FunCoup" id="O54897">
    <property type="interactions" value="415"/>
</dbReference>
<dbReference type="STRING" id="10090.ENSMUSP00000098680"/>
<dbReference type="GlyCosmos" id="O54897">
    <property type="glycosylation" value="1 site, No reported glycans"/>
</dbReference>
<dbReference type="GlyGen" id="O54897">
    <property type="glycosylation" value="2 sites"/>
</dbReference>
<dbReference type="iPTMnet" id="O54897"/>
<dbReference type="PhosphoSitePlus" id="O54897"/>
<dbReference type="PaxDb" id="10090-ENSMUSP00000098680"/>
<dbReference type="ProteomicsDB" id="271041"/>
<dbReference type="Antibodypedia" id="15615">
    <property type="antibodies" value="278 antibodies from 28 providers"/>
</dbReference>
<dbReference type="DNASU" id="14761"/>
<dbReference type="Ensembl" id="ENSMUST00000101122.3">
    <property type="protein sequence ID" value="ENSMUSP00000098680.2"/>
    <property type="gene ID" value="ENSMUSG00000072875.3"/>
</dbReference>
<dbReference type="GeneID" id="14761"/>
<dbReference type="KEGG" id="mmu:14761"/>
<dbReference type="UCSC" id="uc009dbs.1">
    <property type="organism name" value="mouse"/>
</dbReference>
<dbReference type="AGR" id="MGI:1202299"/>
<dbReference type="CTD" id="2850"/>
<dbReference type="MGI" id="MGI:1202299">
    <property type="gene designation" value="Gpr27"/>
</dbReference>
<dbReference type="VEuPathDB" id="HostDB:ENSMUSG00000072875"/>
<dbReference type="eggNOG" id="KOG3656">
    <property type="taxonomic scope" value="Eukaryota"/>
</dbReference>
<dbReference type="GeneTree" id="ENSGT00890000139436"/>
<dbReference type="HOGENOM" id="CLU_055518_0_0_1"/>
<dbReference type="InParanoid" id="O54897"/>
<dbReference type="OMA" id="CIFEHRH"/>
<dbReference type="OrthoDB" id="6129346at2759"/>
<dbReference type="PhylomeDB" id="O54897"/>
<dbReference type="TreeFam" id="TF331163"/>
<dbReference type="Reactome" id="R-MMU-418555">
    <property type="pathway name" value="G alpha (s) signalling events"/>
</dbReference>
<dbReference type="BioGRID-ORCS" id="14761">
    <property type="hits" value="1 hit in 76 CRISPR screens"/>
</dbReference>
<dbReference type="PRO" id="PR:O54897"/>
<dbReference type="Proteomes" id="UP000000589">
    <property type="component" value="Chromosome 6"/>
</dbReference>
<dbReference type="RNAct" id="O54897">
    <property type="molecule type" value="protein"/>
</dbReference>
<dbReference type="Bgee" id="ENSMUSG00000072875">
    <property type="expression patterns" value="Expressed in caudate-putamen and 208 other cell types or tissues"/>
</dbReference>
<dbReference type="GO" id="GO:0005886">
    <property type="term" value="C:plasma membrane"/>
    <property type="evidence" value="ECO:0000314"/>
    <property type="project" value="MGI"/>
</dbReference>
<dbReference type="GO" id="GO:0004930">
    <property type="term" value="F:G protein-coupled receptor activity"/>
    <property type="evidence" value="ECO:0007669"/>
    <property type="project" value="UniProtKB-KW"/>
</dbReference>
<dbReference type="GO" id="GO:0035774">
    <property type="term" value="P:positive regulation of insulin secretion involved in cellular response to glucose stimulus"/>
    <property type="evidence" value="ECO:0000315"/>
    <property type="project" value="MGI"/>
</dbReference>
<dbReference type="GO" id="GO:1900738">
    <property type="term" value="P:positive regulation of phospholipase C-activating G protein-coupled receptor signaling pathway"/>
    <property type="evidence" value="ECO:0000314"/>
    <property type="project" value="MGI"/>
</dbReference>
<dbReference type="CDD" id="cd15216">
    <property type="entry name" value="7tmA_SREB1_GPR27"/>
    <property type="match status" value="1"/>
</dbReference>
<dbReference type="FunFam" id="1.20.1070.10:FF:000074">
    <property type="entry name" value="probable G-protein coupled receptor 173"/>
    <property type="match status" value="1"/>
</dbReference>
<dbReference type="Gene3D" id="1.20.1070.10">
    <property type="entry name" value="Rhodopsin 7-helix transmembrane proteins"/>
    <property type="match status" value="1"/>
</dbReference>
<dbReference type="InterPro" id="IPR051509">
    <property type="entry name" value="GPCR_Orphan/Phoenixin"/>
</dbReference>
<dbReference type="InterPro" id="IPR000276">
    <property type="entry name" value="GPCR_Rhodpsn"/>
</dbReference>
<dbReference type="InterPro" id="IPR017452">
    <property type="entry name" value="GPCR_Rhodpsn_7TM"/>
</dbReference>
<dbReference type="PANTHER" id="PTHR19268">
    <property type="entry name" value="G PROTEIN-COUPLED RECEPTOR"/>
    <property type="match status" value="1"/>
</dbReference>
<dbReference type="PANTHER" id="PTHR19268:SF8">
    <property type="entry name" value="G-PROTEIN COUPLED RECEPTOR 27-RELATED"/>
    <property type="match status" value="1"/>
</dbReference>
<dbReference type="Pfam" id="PF00001">
    <property type="entry name" value="7tm_1"/>
    <property type="match status" value="1"/>
</dbReference>
<dbReference type="PRINTS" id="PR00237">
    <property type="entry name" value="GPCRRHODOPSN"/>
</dbReference>
<dbReference type="SUPFAM" id="SSF81321">
    <property type="entry name" value="Family A G protein-coupled receptor-like"/>
    <property type="match status" value="1"/>
</dbReference>
<dbReference type="PROSITE" id="PS50262">
    <property type="entry name" value="G_PROTEIN_RECEP_F1_2"/>
    <property type="match status" value="1"/>
</dbReference>
<gene>
    <name type="primary">Gpr27</name>
    <name type="synonym">Sreb1</name>
</gene>
<keyword id="KW-1003">Cell membrane</keyword>
<keyword id="KW-1015">Disulfide bond</keyword>
<keyword id="KW-0297">G-protein coupled receptor</keyword>
<keyword id="KW-0325">Glycoprotein</keyword>
<keyword id="KW-0472">Membrane</keyword>
<keyword id="KW-0675">Receptor</keyword>
<keyword id="KW-1185">Reference proteome</keyword>
<keyword id="KW-0807">Transducer</keyword>
<keyword id="KW-0812">Transmembrane</keyword>
<keyword id="KW-1133">Transmembrane helix</keyword>
<reference key="1">
    <citation type="journal article" date="1998" name="Genomics">
        <title>Discovery of three novel G-protein-coupled receptor genes.</title>
        <authorList>
            <person name="O'Dowd B.F."/>
            <person name="Nguyen T."/>
            <person name="Marchese A."/>
            <person name="Cheng R."/>
            <person name="Lynch K.R."/>
            <person name="Heng H.H.Q."/>
            <person name="Kolakowski L.F. Jr."/>
            <person name="George S.R."/>
        </authorList>
    </citation>
    <scope>NUCLEOTIDE SEQUENCE [GENOMIC DNA]</scope>
</reference>
<accession>O54897</accession>